<evidence type="ECO:0000250" key="1"/>
<evidence type="ECO:0000255" key="2"/>
<evidence type="ECO:0000305" key="3"/>
<evidence type="ECO:0007829" key="4">
    <source>
        <dbReference type="PDB" id="4N8N"/>
    </source>
</evidence>
<feature type="chain" id="PRO_0000166797" description="Cell division protein FtsX">
    <location>
        <begin position="1"/>
        <end position="297"/>
    </location>
</feature>
<feature type="topological domain" description="Cytoplasmic" evidence="2">
    <location>
        <begin position="1"/>
        <end position="21"/>
    </location>
</feature>
<feature type="transmembrane region" description="Helical" evidence="2">
    <location>
        <begin position="22"/>
        <end position="42"/>
    </location>
</feature>
<feature type="topological domain" description="Extracellular" evidence="2">
    <location>
        <begin position="43"/>
        <end position="171"/>
    </location>
</feature>
<feature type="transmembrane region" description="Helical" evidence="2">
    <location>
        <begin position="172"/>
        <end position="192"/>
    </location>
</feature>
<feature type="topological domain" description="Cytoplasmic" evidence="2">
    <location>
        <begin position="193"/>
        <end position="219"/>
    </location>
</feature>
<feature type="transmembrane region" description="Helical" evidence="2">
    <location>
        <begin position="220"/>
        <end position="240"/>
    </location>
</feature>
<feature type="topological domain" description="Extracellular" evidence="2">
    <location>
        <begin position="241"/>
        <end position="267"/>
    </location>
</feature>
<feature type="transmembrane region" description="Helical" evidence="2">
    <location>
        <begin position="268"/>
        <end position="288"/>
    </location>
</feature>
<feature type="topological domain" description="Cytoplasmic" evidence="2">
    <location>
        <begin position="289"/>
        <end position="297"/>
    </location>
</feature>
<feature type="strand" evidence="4">
    <location>
        <begin position="58"/>
        <end position="62"/>
    </location>
</feature>
<feature type="helix" evidence="4">
    <location>
        <begin position="64"/>
        <end position="67"/>
    </location>
</feature>
<feature type="strand" evidence="4">
    <location>
        <begin position="71"/>
        <end position="73"/>
    </location>
</feature>
<feature type="helix" evidence="4">
    <location>
        <begin position="76"/>
        <end position="86"/>
    </location>
</feature>
<feature type="strand" evidence="4">
    <location>
        <begin position="91"/>
        <end position="97"/>
    </location>
</feature>
<feature type="helix" evidence="4">
    <location>
        <begin position="99"/>
        <end position="109"/>
    </location>
</feature>
<feature type="helix" evidence="4">
    <location>
        <begin position="111"/>
        <end position="115"/>
    </location>
</feature>
<feature type="strand" evidence="4">
    <location>
        <begin position="125"/>
        <end position="132"/>
    </location>
</feature>
<feature type="helix" evidence="4">
    <location>
        <begin position="133"/>
        <end position="135"/>
    </location>
</feature>
<feature type="helix" evidence="4">
    <location>
        <begin position="136"/>
        <end position="144"/>
    </location>
</feature>
<feature type="strand" evidence="4">
    <location>
        <begin position="149"/>
        <end position="153"/>
    </location>
</feature>
<gene>
    <name type="primary">ftsX</name>
    <name type="ordered locus">Rv3101c</name>
    <name type="ORF">MTCY164.12c</name>
</gene>
<comment type="function">
    <text evidence="1">Part of the ABC transporter FtsEX involved in cellular division.</text>
</comment>
<comment type="subunit">
    <text evidence="1">Forms a membrane-associated complex with FtsE.</text>
</comment>
<comment type="subcellular location">
    <subcellularLocation>
        <location evidence="1">Cell membrane</location>
        <topology evidence="1">Multi-pass membrane protein</topology>
    </subcellularLocation>
</comment>
<comment type="similarity">
    <text evidence="3">Belongs to the ABC-4 integral membrane protein family. FtsX subfamily.</text>
</comment>
<dbReference type="EMBL" id="X70031">
    <property type="protein sequence ID" value="CAA49620.1"/>
    <property type="molecule type" value="Genomic_DNA"/>
</dbReference>
<dbReference type="EMBL" id="AL123456">
    <property type="protein sequence ID" value="CCP45911.1"/>
    <property type="molecule type" value="Genomic_DNA"/>
</dbReference>
<dbReference type="PIR" id="D70919">
    <property type="entry name" value="D70919"/>
</dbReference>
<dbReference type="RefSeq" id="NP_217617.1">
    <property type="nucleotide sequence ID" value="NC_000962.3"/>
</dbReference>
<dbReference type="RefSeq" id="WP_003416117.1">
    <property type="nucleotide sequence ID" value="NZ_NVQJ01000011.1"/>
</dbReference>
<dbReference type="PDB" id="4N8N">
    <property type="method" value="X-ray"/>
    <property type="resolution" value="1.87 A"/>
    <property type="chains" value="A/B/C/D=45-157"/>
</dbReference>
<dbReference type="PDB" id="4N8O">
    <property type="method" value="X-ray"/>
    <property type="resolution" value="2.30 A"/>
    <property type="chains" value="A/B=45-157"/>
</dbReference>
<dbReference type="PDB" id="8IDB">
    <property type="method" value="EM"/>
    <property type="resolution" value="3.90 A"/>
    <property type="chains" value="C/D=1-297"/>
</dbReference>
<dbReference type="PDB" id="8IDC">
    <property type="method" value="EM"/>
    <property type="resolution" value="3.90 A"/>
    <property type="chains" value="C/D=1-297"/>
</dbReference>
<dbReference type="PDB" id="8IDD">
    <property type="method" value="EM"/>
    <property type="resolution" value="4.00 A"/>
    <property type="chains" value="C/D=1-297"/>
</dbReference>
<dbReference type="PDB" id="8IGQ">
    <property type="method" value="EM"/>
    <property type="resolution" value="5.70 A"/>
    <property type="chains" value="C/D=1-297"/>
</dbReference>
<dbReference type="PDB" id="8JIA">
    <property type="method" value="EM"/>
    <property type="resolution" value="3.90 A"/>
    <property type="chains" value="C/D=1-297"/>
</dbReference>
<dbReference type="PDBsum" id="4N8N"/>
<dbReference type="PDBsum" id="4N8O"/>
<dbReference type="PDBsum" id="8IDB"/>
<dbReference type="PDBsum" id="8IDC"/>
<dbReference type="PDBsum" id="8IDD"/>
<dbReference type="PDBsum" id="8IGQ"/>
<dbReference type="PDBsum" id="8JIA"/>
<dbReference type="SMR" id="P9WG19"/>
<dbReference type="FunCoup" id="P9WG19">
    <property type="interactions" value="89"/>
</dbReference>
<dbReference type="STRING" id="83332.Rv3101c"/>
<dbReference type="PaxDb" id="83332-Rv3101c"/>
<dbReference type="DNASU" id="888673"/>
<dbReference type="GeneID" id="888673"/>
<dbReference type="KEGG" id="mtu:Rv3101c"/>
<dbReference type="KEGG" id="mtv:RVBD_3101c"/>
<dbReference type="TubercuList" id="Rv3101c"/>
<dbReference type="eggNOG" id="COG2177">
    <property type="taxonomic scope" value="Bacteria"/>
</dbReference>
<dbReference type="InParanoid" id="P9WG19"/>
<dbReference type="OrthoDB" id="9812531at2"/>
<dbReference type="PhylomeDB" id="P9WG19"/>
<dbReference type="EvolutionaryTrace" id="P9WG19"/>
<dbReference type="Proteomes" id="UP000001584">
    <property type="component" value="Chromosome"/>
</dbReference>
<dbReference type="GO" id="GO:0009274">
    <property type="term" value="C:peptidoglycan-based cell wall"/>
    <property type="evidence" value="ECO:0007005"/>
    <property type="project" value="MTBBASE"/>
</dbReference>
<dbReference type="GO" id="GO:0005886">
    <property type="term" value="C:plasma membrane"/>
    <property type="evidence" value="ECO:0007005"/>
    <property type="project" value="MTBBASE"/>
</dbReference>
<dbReference type="GO" id="GO:0051301">
    <property type="term" value="P:cell division"/>
    <property type="evidence" value="ECO:0000250"/>
    <property type="project" value="UniProtKB"/>
</dbReference>
<dbReference type="FunFam" id="3.30.70.3040:FF:000004">
    <property type="entry name" value="Cell division protein FtsX"/>
    <property type="match status" value="1"/>
</dbReference>
<dbReference type="Gene3D" id="3.30.70.3040">
    <property type="match status" value="1"/>
</dbReference>
<dbReference type="InterPro" id="IPR003838">
    <property type="entry name" value="ABC3_permease_C"/>
</dbReference>
<dbReference type="InterPro" id="IPR004513">
    <property type="entry name" value="FtsX"/>
</dbReference>
<dbReference type="InterPro" id="IPR047929">
    <property type="entry name" value="FtsX_actino"/>
</dbReference>
<dbReference type="InterPro" id="IPR040690">
    <property type="entry name" value="FtsX_ECD"/>
</dbReference>
<dbReference type="NCBIfam" id="NF038346">
    <property type="entry name" value="FtsX_actino"/>
    <property type="match status" value="1"/>
</dbReference>
<dbReference type="PANTHER" id="PTHR47755">
    <property type="entry name" value="CELL DIVISION PROTEIN FTSX"/>
    <property type="match status" value="1"/>
</dbReference>
<dbReference type="PANTHER" id="PTHR47755:SF1">
    <property type="entry name" value="CELL DIVISION PROTEIN FTSX"/>
    <property type="match status" value="1"/>
</dbReference>
<dbReference type="Pfam" id="PF02687">
    <property type="entry name" value="FtsX"/>
    <property type="match status" value="1"/>
</dbReference>
<dbReference type="Pfam" id="PF18075">
    <property type="entry name" value="FtsX_ECD"/>
    <property type="match status" value="1"/>
</dbReference>
<dbReference type="PIRSF" id="PIRSF003097">
    <property type="entry name" value="FtsX"/>
    <property type="match status" value="1"/>
</dbReference>
<keyword id="KW-0002">3D-structure</keyword>
<keyword id="KW-0131">Cell cycle</keyword>
<keyword id="KW-0132">Cell division</keyword>
<keyword id="KW-1003">Cell membrane</keyword>
<keyword id="KW-0472">Membrane</keyword>
<keyword id="KW-1185">Reference proteome</keyword>
<keyword id="KW-0812">Transmembrane</keyword>
<keyword id="KW-1133">Transmembrane helix</keyword>
<accession>P9WG19</accession>
<accession>L0TBK0</accession>
<accession>O08113</accession>
<accession>P96293</accession>
<protein>
    <recommendedName>
        <fullName>Cell division protein FtsX</fullName>
    </recommendedName>
</protein>
<name>FTSX_MYCTU</name>
<proteinExistence type="evidence at protein level"/>
<sequence>MRFGFLLNEVLTGFRRNVTMTIAMILTTAISVGLFGGGMLVVRLADSSRAIYLDRVESQVFLTEDVSANDSSCDTTACKALREKIETRSDVKAVRFLNRQQAYDDAIRKFPQFKDVAGKDSFPASFIVKLENPEQHKDFDTAMKGQPGVLDVLNQKELIDRLFAVLDGLSNAAFAVALVQAIGAILLIANMVQVAAYTRRTEIGIMRLVGASRWYTQLPFLVEAMLAATMGVGIAVAGLMVVRALFLENALNQFYQANLIAKVDYADILFITPWLLLLGVAMSGLTAYLTLRLYVRR</sequence>
<organism>
    <name type="scientific">Mycobacterium tuberculosis (strain ATCC 25618 / H37Rv)</name>
    <dbReference type="NCBI Taxonomy" id="83332"/>
    <lineage>
        <taxon>Bacteria</taxon>
        <taxon>Bacillati</taxon>
        <taxon>Actinomycetota</taxon>
        <taxon>Actinomycetes</taxon>
        <taxon>Mycobacteriales</taxon>
        <taxon>Mycobacteriaceae</taxon>
        <taxon>Mycobacterium</taxon>
        <taxon>Mycobacterium tuberculosis complex</taxon>
    </lineage>
</organism>
<reference key="1">
    <citation type="journal article" date="1996" name="Gene">
        <title>An M. tuberculosis DNA fragment contains genes encoding cell division proteins ftsX and ftsE, a basic protein and homologues of PemK and small protein B.</title>
        <authorList>
            <person name="Tyagi J.S."/>
            <person name="Das T.K."/>
            <person name="Kinger A.K."/>
        </authorList>
    </citation>
    <scope>NUCLEOTIDE SEQUENCE [GENOMIC DNA]</scope>
    <source>
        <strain>ATCC 25618 / H37Rv</strain>
    </source>
</reference>
<reference key="2">
    <citation type="journal article" date="1998" name="Nature">
        <title>Deciphering the biology of Mycobacterium tuberculosis from the complete genome sequence.</title>
        <authorList>
            <person name="Cole S.T."/>
            <person name="Brosch R."/>
            <person name="Parkhill J."/>
            <person name="Garnier T."/>
            <person name="Churcher C.M."/>
            <person name="Harris D.E."/>
            <person name="Gordon S.V."/>
            <person name="Eiglmeier K."/>
            <person name="Gas S."/>
            <person name="Barry C.E. III"/>
            <person name="Tekaia F."/>
            <person name="Badcock K."/>
            <person name="Basham D."/>
            <person name="Brown D."/>
            <person name="Chillingworth T."/>
            <person name="Connor R."/>
            <person name="Davies R.M."/>
            <person name="Devlin K."/>
            <person name="Feltwell T."/>
            <person name="Gentles S."/>
            <person name="Hamlin N."/>
            <person name="Holroyd S."/>
            <person name="Hornsby T."/>
            <person name="Jagels K."/>
            <person name="Krogh A."/>
            <person name="McLean J."/>
            <person name="Moule S."/>
            <person name="Murphy L.D."/>
            <person name="Oliver S."/>
            <person name="Osborne J."/>
            <person name="Quail M.A."/>
            <person name="Rajandream M.A."/>
            <person name="Rogers J."/>
            <person name="Rutter S."/>
            <person name="Seeger K."/>
            <person name="Skelton S."/>
            <person name="Squares S."/>
            <person name="Squares R."/>
            <person name="Sulston J.E."/>
            <person name="Taylor K."/>
            <person name="Whitehead S."/>
            <person name="Barrell B.G."/>
        </authorList>
    </citation>
    <scope>NUCLEOTIDE SEQUENCE [LARGE SCALE GENOMIC DNA]</scope>
    <source>
        <strain>ATCC 25618 / H37Rv</strain>
    </source>
</reference>
<reference key="3">
    <citation type="journal article" date="2011" name="Mol. Cell. Proteomics">
        <title>Proteogenomic analysis of Mycobacterium tuberculosis by high resolution mass spectrometry.</title>
        <authorList>
            <person name="Kelkar D.S."/>
            <person name="Kumar D."/>
            <person name="Kumar P."/>
            <person name="Balakrishnan L."/>
            <person name="Muthusamy B."/>
            <person name="Yadav A.K."/>
            <person name="Shrivastava P."/>
            <person name="Marimuthu A."/>
            <person name="Anand S."/>
            <person name="Sundaram H."/>
            <person name="Kingsbury R."/>
            <person name="Harsha H.C."/>
            <person name="Nair B."/>
            <person name="Prasad T.S."/>
            <person name="Chauhan D.S."/>
            <person name="Katoch K."/>
            <person name="Katoch V.M."/>
            <person name="Kumar P."/>
            <person name="Chaerkady R."/>
            <person name="Ramachandran S."/>
            <person name="Dash D."/>
            <person name="Pandey A."/>
        </authorList>
    </citation>
    <scope>IDENTIFICATION BY MASS SPECTROMETRY [LARGE SCALE ANALYSIS]</scope>
    <source>
        <strain>ATCC 25618 / H37Rv</strain>
    </source>
</reference>